<organism>
    <name type="scientific">Homo sapiens</name>
    <name type="common">Human</name>
    <dbReference type="NCBI Taxonomy" id="9606"/>
    <lineage>
        <taxon>Eukaryota</taxon>
        <taxon>Metazoa</taxon>
        <taxon>Chordata</taxon>
        <taxon>Craniata</taxon>
        <taxon>Vertebrata</taxon>
        <taxon>Euteleostomi</taxon>
        <taxon>Mammalia</taxon>
        <taxon>Eutheria</taxon>
        <taxon>Euarchontoglires</taxon>
        <taxon>Primates</taxon>
        <taxon>Haplorrhini</taxon>
        <taxon>Catarrhini</taxon>
        <taxon>Hominidae</taxon>
        <taxon>Homo</taxon>
    </lineage>
</organism>
<keyword id="KW-0002">3D-structure</keyword>
<keyword id="KW-0068">Autocatalytic cleavage</keyword>
<keyword id="KW-0106">Calcium</keyword>
<keyword id="KW-0153">Cholesterol metabolism</keyword>
<keyword id="KW-0903">Direct protein sequencing</keyword>
<keyword id="KW-0225">Disease variant</keyword>
<keyword id="KW-0242">Dwarfism</keyword>
<keyword id="KW-0256">Endoplasmic reticulum</keyword>
<keyword id="KW-0325">Glycoprotein</keyword>
<keyword id="KW-0333">Golgi apparatus</keyword>
<keyword id="KW-0378">Hydrolase</keyword>
<keyword id="KW-0443">Lipid metabolism</keyword>
<keyword id="KW-0472">Membrane</keyword>
<keyword id="KW-0597">Phosphoprotein</keyword>
<keyword id="KW-0645">Protease</keyword>
<keyword id="KW-1267">Proteomics identification</keyword>
<keyword id="KW-1185">Reference proteome</keyword>
<keyword id="KW-0720">Serine protease</keyword>
<keyword id="KW-0732">Signal</keyword>
<keyword id="KW-0753">Steroid metabolism</keyword>
<keyword id="KW-1207">Sterol metabolism</keyword>
<keyword id="KW-0812">Transmembrane</keyword>
<keyword id="KW-1133">Transmembrane helix</keyword>
<keyword id="KW-0865">Zymogen</keyword>
<proteinExistence type="evidence at protein level"/>
<name>MBTP1_HUMAN</name>
<gene>
    <name evidence="20" type="primary">MBTPS1</name>
    <name evidence="18" type="synonym">KIAA0091</name>
    <name evidence="16 17" type="synonym">S1P</name>
    <name evidence="15" type="synonym">SKI1</name>
</gene>
<reference key="1">
    <citation type="journal article" date="2000" name="J. Hum. Genet.">
        <title>Genomic structure and chromosomal mapping of the human site-1 protease (S1P) gene.</title>
        <authorList>
            <person name="Nakajima T."/>
            <person name="Iwaki K."/>
            <person name="Kodama T."/>
            <person name="Inazawa J."/>
            <person name="Emi M."/>
        </authorList>
    </citation>
    <scope>NUCLEOTIDE SEQUENCE [GENOMIC DNA]</scope>
    <scope>TISSUE SPECIFICITY</scope>
    <scope>INDUCTION</scope>
    <source>
        <tissue>Myeloid</tissue>
    </source>
</reference>
<reference key="2">
    <citation type="journal article" date="1995" name="DNA Res.">
        <title>Prediction of the coding sequences of unidentified human genes. III. The coding sequences of 40 new genes (KIAA0081-KIAA0120) deduced by analysis of cDNA clones from human cell line KG-1.</title>
        <authorList>
            <person name="Nagase T."/>
            <person name="Miyajima N."/>
            <person name="Tanaka A."/>
            <person name="Sazuka T."/>
            <person name="Seki N."/>
            <person name="Sato S."/>
            <person name="Tabata S."/>
            <person name="Ishikawa K."/>
            <person name="Kawarabayasi Y."/>
            <person name="Kotani H."/>
            <person name="Nomura N."/>
        </authorList>
    </citation>
    <scope>NUCLEOTIDE SEQUENCE [LARGE SCALE MRNA]</scope>
    <source>
        <tissue>Bone marrow</tissue>
    </source>
</reference>
<reference key="3">
    <citation type="journal article" date="2004" name="Nat. Genet.">
        <title>Complete sequencing and characterization of 21,243 full-length human cDNAs.</title>
        <authorList>
            <person name="Ota T."/>
            <person name="Suzuki Y."/>
            <person name="Nishikawa T."/>
            <person name="Otsuki T."/>
            <person name="Sugiyama T."/>
            <person name="Irie R."/>
            <person name="Wakamatsu A."/>
            <person name="Hayashi K."/>
            <person name="Sato H."/>
            <person name="Nagai K."/>
            <person name="Kimura K."/>
            <person name="Makita H."/>
            <person name="Sekine M."/>
            <person name="Obayashi M."/>
            <person name="Nishi T."/>
            <person name="Shibahara T."/>
            <person name="Tanaka T."/>
            <person name="Ishii S."/>
            <person name="Yamamoto J."/>
            <person name="Saito K."/>
            <person name="Kawai Y."/>
            <person name="Isono Y."/>
            <person name="Nakamura Y."/>
            <person name="Nagahari K."/>
            <person name="Murakami K."/>
            <person name="Yasuda T."/>
            <person name="Iwayanagi T."/>
            <person name="Wagatsuma M."/>
            <person name="Shiratori A."/>
            <person name="Sudo H."/>
            <person name="Hosoiri T."/>
            <person name="Kaku Y."/>
            <person name="Kodaira H."/>
            <person name="Kondo H."/>
            <person name="Sugawara M."/>
            <person name="Takahashi M."/>
            <person name="Kanda K."/>
            <person name="Yokoi T."/>
            <person name="Furuya T."/>
            <person name="Kikkawa E."/>
            <person name="Omura Y."/>
            <person name="Abe K."/>
            <person name="Kamihara K."/>
            <person name="Katsuta N."/>
            <person name="Sato K."/>
            <person name="Tanikawa M."/>
            <person name="Yamazaki M."/>
            <person name="Ninomiya K."/>
            <person name="Ishibashi T."/>
            <person name="Yamashita H."/>
            <person name="Murakawa K."/>
            <person name="Fujimori K."/>
            <person name="Tanai H."/>
            <person name="Kimata M."/>
            <person name="Watanabe M."/>
            <person name="Hiraoka S."/>
            <person name="Chiba Y."/>
            <person name="Ishida S."/>
            <person name="Ono Y."/>
            <person name="Takiguchi S."/>
            <person name="Watanabe S."/>
            <person name="Yosida M."/>
            <person name="Hotuta T."/>
            <person name="Kusano J."/>
            <person name="Kanehori K."/>
            <person name="Takahashi-Fujii A."/>
            <person name="Hara H."/>
            <person name="Tanase T.-O."/>
            <person name="Nomura Y."/>
            <person name="Togiya S."/>
            <person name="Komai F."/>
            <person name="Hara R."/>
            <person name="Takeuchi K."/>
            <person name="Arita M."/>
            <person name="Imose N."/>
            <person name="Musashino K."/>
            <person name="Yuuki H."/>
            <person name="Oshima A."/>
            <person name="Sasaki N."/>
            <person name="Aotsuka S."/>
            <person name="Yoshikawa Y."/>
            <person name="Matsunawa H."/>
            <person name="Ichihara T."/>
            <person name="Shiohata N."/>
            <person name="Sano S."/>
            <person name="Moriya S."/>
            <person name="Momiyama H."/>
            <person name="Satoh N."/>
            <person name="Takami S."/>
            <person name="Terashima Y."/>
            <person name="Suzuki O."/>
            <person name="Nakagawa S."/>
            <person name="Senoh A."/>
            <person name="Mizoguchi H."/>
            <person name="Goto Y."/>
            <person name="Shimizu F."/>
            <person name="Wakebe H."/>
            <person name="Hishigaki H."/>
            <person name="Watanabe T."/>
            <person name="Sugiyama A."/>
            <person name="Takemoto M."/>
            <person name="Kawakami B."/>
            <person name="Yamazaki M."/>
            <person name="Watanabe K."/>
            <person name="Kumagai A."/>
            <person name="Itakura S."/>
            <person name="Fukuzumi Y."/>
            <person name="Fujimori Y."/>
            <person name="Komiyama M."/>
            <person name="Tashiro H."/>
            <person name="Tanigami A."/>
            <person name="Fujiwara T."/>
            <person name="Ono T."/>
            <person name="Yamada K."/>
            <person name="Fujii Y."/>
            <person name="Ozaki K."/>
            <person name="Hirao M."/>
            <person name="Ohmori Y."/>
            <person name="Kawabata A."/>
            <person name="Hikiji T."/>
            <person name="Kobatake N."/>
            <person name="Inagaki H."/>
            <person name="Ikema Y."/>
            <person name="Okamoto S."/>
            <person name="Okitani R."/>
            <person name="Kawakami T."/>
            <person name="Noguchi S."/>
            <person name="Itoh T."/>
            <person name="Shigeta K."/>
            <person name="Senba T."/>
            <person name="Matsumura K."/>
            <person name="Nakajima Y."/>
            <person name="Mizuno T."/>
            <person name="Morinaga M."/>
            <person name="Sasaki M."/>
            <person name="Togashi T."/>
            <person name="Oyama M."/>
            <person name="Hata H."/>
            <person name="Watanabe M."/>
            <person name="Komatsu T."/>
            <person name="Mizushima-Sugano J."/>
            <person name="Satoh T."/>
            <person name="Shirai Y."/>
            <person name="Takahashi Y."/>
            <person name="Nakagawa K."/>
            <person name="Okumura K."/>
            <person name="Nagase T."/>
            <person name="Nomura N."/>
            <person name="Kikuchi H."/>
            <person name="Masuho Y."/>
            <person name="Yamashita R."/>
            <person name="Nakai K."/>
            <person name="Yada T."/>
            <person name="Nakamura Y."/>
            <person name="Ohara O."/>
            <person name="Isogai T."/>
            <person name="Sugano S."/>
        </authorList>
    </citation>
    <scope>NUCLEOTIDE SEQUENCE [LARGE SCALE MRNA]</scope>
    <source>
        <tissue>Placenta</tissue>
    </source>
</reference>
<reference key="4">
    <citation type="journal article" date="2004" name="Nature">
        <title>The sequence and analysis of duplication-rich human chromosome 16.</title>
        <authorList>
            <person name="Martin J."/>
            <person name="Han C."/>
            <person name="Gordon L.A."/>
            <person name="Terry A."/>
            <person name="Prabhakar S."/>
            <person name="She X."/>
            <person name="Xie G."/>
            <person name="Hellsten U."/>
            <person name="Chan Y.M."/>
            <person name="Altherr M."/>
            <person name="Couronne O."/>
            <person name="Aerts A."/>
            <person name="Bajorek E."/>
            <person name="Black S."/>
            <person name="Blumer H."/>
            <person name="Branscomb E."/>
            <person name="Brown N.C."/>
            <person name="Bruno W.J."/>
            <person name="Buckingham J.M."/>
            <person name="Callen D.F."/>
            <person name="Campbell C.S."/>
            <person name="Campbell M.L."/>
            <person name="Campbell E.W."/>
            <person name="Caoile C."/>
            <person name="Challacombe J.F."/>
            <person name="Chasteen L.A."/>
            <person name="Chertkov O."/>
            <person name="Chi H.C."/>
            <person name="Christensen M."/>
            <person name="Clark L.M."/>
            <person name="Cohn J.D."/>
            <person name="Denys M."/>
            <person name="Detter J.C."/>
            <person name="Dickson M."/>
            <person name="Dimitrijevic-Bussod M."/>
            <person name="Escobar J."/>
            <person name="Fawcett J.J."/>
            <person name="Flowers D."/>
            <person name="Fotopulos D."/>
            <person name="Glavina T."/>
            <person name="Gomez M."/>
            <person name="Gonzales E."/>
            <person name="Goodstein D."/>
            <person name="Goodwin L.A."/>
            <person name="Grady D.L."/>
            <person name="Grigoriev I."/>
            <person name="Groza M."/>
            <person name="Hammon N."/>
            <person name="Hawkins T."/>
            <person name="Haydu L."/>
            <person name="Hildebrand C.E."/>
            <person name="Huang W."/>
            <person name="Israni S."/>
            <person name="Jett J."/>
            <person name="Jewett P.B."/>
            <person name="Kadner K."/>
            <person name="Kimball H."/>
            <person name="Kobayashi A."/>
            <person name="Krawczyk M.-C."/>
            <person name="Leyba T."/>
            <person name="Longmire J.L."/>
            <person name="Lopez F."/>
            <person name="Lou Y."/>
            <person name="Lowry S."/>
            <person name="Ludeman T."/>
            <person name="Manohar C.F."/>
            <person name="Mark G.A."/>
            <person name="McMurray K.L."/>
            <person name="Meincke L.J."/>
            <person name="Morgan J."/>
            <person name="Moyzis R.K."/>
            <person name="Mundt M.O."/>
            <person name="Munk A.C."/>
            <person name="Nandkeshwar R.D."/>
            <person name="Pitluck S."/>
            <person name="Pollard M."/>
            <person name="Predki P."/>
            <person name="Parson-Quintana B."/>
            <person name="Ramirez L."/>
            <person name="Rash S."/>
            <person name="Retterer J."/>
            <person name="Ricke D.O."/>
            <person name="Robinson D.L."/>
            <person name="Rodriguez A."/>
            <person name="Salamov A."/>
            <person name="Saunders E.H."/>
            <person name="Scott D."/>
            <person name="Shough T."/>
            <person name="Stallings R.L."/>
            <person name="Stalvey M."/>
            <person name="Sutherland R.D."/>
            <person name="Tapia R."/>
            <person name="Tesmer J.G."/>
            <person name="Thayer N."/>
            <person name="Thompson L.S."/>
            <person name="Tice H."/>
            <person name="Torney D.C."/>
            <person name="Tran-Gyamfi M."/>
            <person name="Tsai M."/>
            <person name="Ulanovsky L.E."/>
            <person name="Ustaszewska A."/>
            <person name="Vo N."/>
            <person name="White P.S."/>
            <person name="Williams A.L."/>
            <person name="Wills P.L."/>
            <person name="Wu J.-R."/>
            <person name="Wu K."/>
            <person name="Yang J."/>
            <person name="DeJong P."/>
            <person name="Bruce D."/>
            <person name="Doggett N.A."/>
            <person name="Deaven L."/>
            <person name="Schmutz J."/>
            <person name="Grimwood J."/>
            <person name="Richardson P."/>
            <person name="Rokhsar D.S."/>
            <person name="Eichler E.E."/>
            <person name="Gilna P."/>
            <person name="Lucas S.M."/>
            <person name="Myers R.M."/>
            <person name="Rubin E.M."/>
            <person name="Pennacchio L.A."/>
        </authorList>
    </citation>
    <scope>NUCLEOTIDE SEQUENCE [LARGE SCALE GENOMIC DNA]</scope>
</reference>
<reference key="5">
    <citation type="journal article" date="2004" name="Genome Res.">
        <title>The status, quality, and expansion of the NIH full-length cDNA project: the Mammalian Gene Collection (MGC).</title>
        <authorList>
            <consortium name="The MGC Project Team"/>
        </authorList>
    </citation>
    <scope>NUCLEOTIDE SEQUENCE [LARGE SCALE MRNA]</scope>
</reference>
<reference key="6">
    <citation type="journal article" date="2007" name="BMC Genomics">
        <title>The full-ORF clone resource of the German cDNA consortium.</title>
        <authorList>
            <person name="Bechtel S."/>
            <person name="Rosenfelder H."/>
            <person name="Duda A."/>
            <person name="Schmidt C.P."/>
            <person name="Ernst U."/>
            <person name="Wellenreuther R."/>
            <person name="Mehrle A."/>
            <person name="Schuster C."/>
            <person name="Bahr A."/>
            <person name="Bloecker H."/>
            <person name="Heubner D."/>
            <person name="Hoerlein A."/>
            <person name="Michel G."/>
            <person name="Wedler H."/>
            <person name="Koehrer K."/>
            <person name="Ottenwaelder B."/>
            <person name="Poustka A."/>
            <person name="Wiemann S."/>
            <person name="Schupp I."/>
        </authorList>
    </citation>
    <scope>NUCLEOTIDE SEQUENCE [LARGE SCALE MRNA] OF 735-1052</scope>
    <source>
        <tissue>Testis</tissue>
    </source>
</reference>
<reference key="7">
    <citation type="journal article" date="2000" name="J. Biol. Chem.">
        <title>Biosynthesis and enzymatic characterization of human SKI-1/S1P and the processing of its inhibitory prosegment.</title>
        <authorList>
            <person name="Toure B.B."/>
            <person name="Munzer J.S."/>
            <person name="Basak A."/>
            <person name="Benjannet S."/>
            <person name="Rochemont J."/>
            <person name="Lazure C."/>
            <person name="Chretien M."/>
            <person name="Seidah N.G."/>
        </authorList>
    </citation>
    <scope>PARTIAL PROTEIN SEQUENCE</scope>
    <scope>FUNCTION</scope>
    <scope>CATALYTIC ACTIVITY</scope>
    <scope>COFACTOR</scope>
    <scope>ACTIVITY REGULATION</scope>
    <scope>IDENTIFICATION BY MASS SPECTROMETRY</scope>
</reference>
<reference key="8">
    <citation type="journal article" date="1999" name="Proc. Natl. Acad. Sci. U.S.A.">
        <title>Mammalian subtilisin/kexin isozyme SKI-1: a widely expressed proprotein convertase with a unique cleavage specificity and cellular localization.</title>
        <authorList>
            <person name="Seidah N.G."/>
            <person name="Mowla S.J."/>
            <person name="Hamelin J."/>
            <person name="Mamarbachi A.M."/>
            <person name="Benjannet S."/>
            <person name="Toure B.B."/>
            <person name="Basak A."/>
            <person name="Munzer J.S."/>
            <person name="Marcinkiewicz J."/>
            <person name="Zhong M."/>
            <person name="Barale J.-C."/>
            <person name="Lazure C."/>
            <person name="Murphy R.A."/>
            <person name="Chretien M."/>
            <person name="Marcinkiewicz M."/>
        </authorList>
    </citation>
    <scope>SUBCELLULAR LOCATION</scope>
</reference>
<reference key="9">
    <citation type="journal article" date="2003" name="J. Biol. Chem.">
        <title>A serine protease inhibitor prevents endoplasmic reticulum stress-induced cleavage but not transport of the membrane-bound transcription factor ATF6.</title>
        <authorList>
            <person name="Okada T."/>
            <person name="Haze K."/>
            <person name="Nadanaka S."/>
            <person name="Yoshida H."/>
            <person name="Seidah N.G."/>
            <person name="Hirano Y."/>
            <person name="Sato R."/>
            <person name="Negishi M."/>
            <person name="Mori K."/>
        </authorList>
    </citation>
    <scope>FUNCTION</scope>
    <scope>ACTIVITY REGULATION</scope>
    <scope>MUTAGENESIS OF HIS-249</scope>
</reference>
<reference key="10">
    <citation type="journal article" date="2006" name="J. Neurochem.">
        <title>Cleavage of the membrane-bound transcription factor OASIS in response to endoplasmic reticulum stress.</title>
        <authorList>
            <person name="Murakami T."/>
            <person name="Kondo S."/>
            <person name="Ogata M."/>
            <person name="Kanemoto S."/>
            <person name="Saito A."/>
            <person name="Wanaka A."/>
            <person name="Imaizumi K."/>
        </authorList>
    </citation>
    <scope>FUNCTION</scope>
    <scope>SUBCELLULAR LOCATION</scope>
</reference>
<reference key="11">
    <citation type="journal article" date="2011" name="Science">
        <title>A key enzyme in the biogenesis of lysosomes is a protease that regulates cholesterol metabolism.</title>
        <authorList>
            <person name="Marschner K."/>
            <person name="Kollmann K."/>
            <person name="Schweizer M."/>
            <person name="Braulke T."/>
            <person name="Pohl S."/>
        </authorList>
    </citation>
    <scope>FUNCTION</scope>
</reference>
<reference key="12">
    <citation type="journal article" date="2015" name="Cell">
        <title>A single kinase generates the majority of the secreted phosphoproteome.</title>
        <authorList>
            <person name="Tagliabracci V.S."/>
            <person name="Wiley S.E."/>
            <person name="Guo X."/>
            <person name="Kinch L.N."/>
            <person name="Durrant E."/>
            <person name="Wen J."/>
            <person name="Xiao J."/>
            <person name="Cui J."/>
            <person name="Nguyen K.B."/>
            <person name="Engel J.L."/>
            <person name="Coon J.J."/>
            <person name="Grishin N."/>
            <person name="Pinna L.A."/>
            <person name="Pagliarini D.J."/>
            <person name="Dixon J.E."/>
        </authorList>
    </citation>
    <scope>PHOSPHORYLATION AT SER-168</scope>
</reference>
<reference key="13">
    <citation type="journal article" date="2018" name="JCI Insight">
        <title>Site-1 protease deficiency causes human skeletal dysplasia due to defective inter-organelle protein trafficking.</title>
        <authorList>
            <person name="Kondo Y."/>
            <person name="Fu J."/>
            <person name="Wang H."/>
            <person name="Hoover C."/>
            <person name="McDaniel J.M."/>
            <person name="Steet R."/>
            <person name="Patra D."/>
            <person name="Song J."/>
            <person name="Pollard L."/>
            <person name="Cathey S."/>
            <person name="Yago T."/>
            <person name="Wiley G."/>
            <person name="Macwana S."/>
            <person name="Guthridge J."/>
            <person name="McGee S."/>
            <person name="Li S."/>
            <person name="Griffin C."/>
            <person name="Furukawa K."/>
            <person name="James J.A."/>
            <person name="Ruan C."/>
            <person name="McEver R.P."/>
            <person name="Wierenga K.J."/>
            <person name="Gaffney P.M."/>
            <person name="Xia L."/>
        </authorList>
    </citation>
    <scope>FUNCTION</scope>
    <scope>INVOLVEMENT IN SEDKF</scope>
    <scope>MUTAGENESIS OF SER-414</scope>
    <scope>VARIANT SEDKF GLY-365</scope>
</reference>
<reference key="14">
    <citation type="journal article" date="2021" name="Proc. Natl. Acad. Sci. U.S.A.">
        <title>Proteolytic processing of secretory pathway kinase Fam20C by site-1 protease promotes biomineralization.</title>
        <authorList>
            <person name="Chen X."/>
            <person name="Zhang J."/>
            <person name="Liu P."/>
            <person name="Wei Y."/>
            <person name="Wang X."/>
            <person name="Xiao J."/>
            <person name="Wang C.C."/>
            <person name="Wang L."/>
        </authorList>
    </citation>
    <scope>FUNCTION</scope>
    <scope>CATALYTIC ACTIVITY</scope>
    <scope>INTERACTION WITH FAM20C</scope>
    <scope>SUBCELLULAR LOCATION</scope>
    <scope>MUTAGENESIS OF SER-414</scope>
</reference>
<reference key="15">
    <citation type="journal article" date="2022" name="Nat. Commun.">
        <title>GCAF(TMEM251) regulates lysosome biogenesis by activating the mannose-6-phosphate pathway.</title>
        <authorList>
            <person name="Zhang W."/>
            <person name="Yang X."/>
            <person name="Li Y."/>
            <person name="Yu L."/>
            <person name="Zhang B."/>
            <person name="Zhang J."/>
            <person name="Cho W.J."/>
            <person name="Venkatarangan V."/>
            <person name="Chen L."/>
            <person name="Burugula B.B."/>
            <person name="Bui S."/>
            <person name="Wang Y."/>
            <person name="Duan C."/>
            <person name="Kitzman J.O."/>
            <person name="Li M."/>
        </authorList>
    </citation>
    <scope>INTERACTION WITH LYSET</scope>
</reference>
<reference key="16">
    <citation type="journal article" date="2022" name="Case Rep. Pediatr.">
        <title>Identification of a New Variant of the MBTPS1 Gene of the Kondo-Fu Type of Spondyloepiphyseal Dysplasia (SEDKF) in a Saudi Patient.</title>
        <authorList>
            <person name="Alotaibi M."/>
            <person name="Aldossari A."/>
            <person name="Khan I."/>
            <person name="Alotaibi L."/>
        </authorList>
    </citation>
    <scope>VARIANT SEDKF ARG-878</scope>
</reference>
<evidence type="ECO:0000255" key="1"/>
<evidence type="ECO:0000255" key="2">
    <source>
        <dbReference type="PROSITE-ProRule" id="PRU01240"/>
    </source>
</evidence>
<evidence type="ECO:0000256" key="3">
    <source>
        <dbReference type="SAM" id="MobiDB-lite"/>
    </source>
</evidence>
<evidence type="ECO:0000269" key="4">
    <source>
    </source>
</evidence>
<evidence type="ECO:0000269" key="5">
    <source>
    </source>
</evidence>
<evidence type="ECO:0000269" key="6">
    <source>
    </source>
</evidence>
<evidence type="ECO:0000269" key="7">
    <source>
    </source>
</evidence>
<evidence type="ECO:0000269" key="8">
    <source>
    </source>
</evidence>
<evidence type="ECO:0000269" key="9">
    <source>
    </source>
</evidence>
<evidence type="ECO:0000269" key="10">
    <source>
    </source>
</evidence>
<evidence type="ECO:0000269" key="11">
    <source>
    </source>
</evidence>
<evidence type="ECO:0000269" key="12">
    <source>
    </source>
</evidence>
<evidence type="ECO:0000269" key="13">
    <source>
    </source>
</evidence>
<evidence type="ECO:0000269" key="14">
    <source>
    </source>
</evidence>
<evidence type="ECO:0000303" key="15">
    <source>
    </source>
</evidence>
<evidence type="ECO:0000303" key="16">
    <source>
    </source>
</evidence>
<evidence type="ECO:0000303" key="17">
    <source>
    </source>
</evidence>
<evidence type="ECO:0000303" key="18">
    <source>
    </source>
</evidence>
<evidence type="ECO:0000305" key="19"/>
<evidence type="ECO:0000312" key="20">
    <source>
        <dbReference type="HGNC" id="HGNC:15456"/>
    </source>
</evidence>
<evidence type="ECO:0007829" key="21">
    <source>
        <dbReference type="PDB" id="8UW8"/>
    </source>
</evidence>
<evidence type="ECO:0007829" key="22">
    <source>
        <dbReference type="PDB" id="8UWC"/>
    </source>
</evidence>
<protein>
    <recommendedName>
        <fullName evidence="19">Membrane-bound transcription factor site-1 protease</fullName>
        <ecNumber evidence="4 8 11">3.4.21.112</ecNumber>
    </recommendedName>
    <alternativeName>
        <fullName evidence="16">Endopeptidase S1P</fullName>
    </alternativeName>
    <alternativeName>
        <fullName evidence="15">Subtilisin/kexin-isozyme 1</fullName>
        <shortName evidence="15">SKI-1</shortName>
    </alternativeName>
</protein>
<dbReference type="EC" id="3.4.21.112" evidence="4 8 11"/>
<dbReference type="EMBL" id="D42053">
    <property type="protein sequence ID" value="BAA07653.2"/>
    <property type="status" value="ALT_INIT"/>
    <property type="molecule type" value="mRNA"/>
</dbReference>
<dbReference type="EMBL" id="AK291773">
    <property type="protein sequence ID" value="BAF84462.1"/>
    <property type="molecule type" value="mRNA"/>
</dbReference>
<dbReference type="EMBL" id="AC040169">
    <property type="status" value="NOT_ANNOTATED_CDS"/>
    <property type="molecule type" value="Genomic_RNA"/>
</dbReference>
<dbReference type="EMBL" id="BC114555">
    <property type="protein sequence ID" value="AAI14556.1"/>
    <property type="molecule type" value="mRNA"/>
</dbReference>
<dbReference type="EMBL" id="BC114961">
    <property type="protein sequence ID" value="AAI14962.1"/>
    <property type="molecule type" value="mRNA"/>
</dbReference>
<dbReference type="EMBL" id="AL133583">
    <property type="protein sequence ID" value="CAB63727.1"/>
    <property type="molecule type" value="mRNA"/>
</dbReference>
<dbReference type="CCDS" id="CCDS10941.1"/>
<dbReference type="PIR" id="T43492">
    <property type="entry name" value="T43492"/>
</dbReference>
<dbReference type="RefSeq" id="NP_003782.1">
    <property type="nucleotide sequence ID" value="NM_003791.4"/>
</dbReference>
<dbReference type="RefSeq" id="XP_047290786.1">
    <property type="nucleotide sequence ID" value="XM_047434830.1"/>
</dbReference>
<dbReference type="RefSeq" id="XP_047290787.1">
    <property type="nucleotide sequence ID" value="XM_047434831.1"/>
</dbReference>
<dbReference type="RefSeq" id="XP_054170226.1">
    <property type="nucleotide sequence ID" value="XM_054314251.1"/>
</dbReference>
<dbReference type="RefSeq" id="XP_054170227.1">
    <property type="nucleotide sequence ID" value="XM_054314252.1"/>
</dbReference>
<dbReference type="PDB" id="8UW8">
    <property type="method" value="EM"/>
    <property type="resolution" value="2.30 A"/>
    <property type="chains" value="A=1-998"/>
</dbReference>
<dbReference type="PDB" id="8UWC">
    <property type="method" value="EM"/>
    <property type="resolution" value="2.27 A"/>
    <property type="chains" value="A=24-998"/>
</dbReference>
<dbReference type="PDBsum" id="8UW8"/>
<dbReference type="PDBsum" id="8UWC"/>
<dbReference type="EMDB" id="EMD-42639"/>
<dbReference type="EMDB" id="EMD-42661"/>
<dbReference type="SMR" id="Q14703"/>
<dbReference type="BioGRID" id="114259">
    <property type="interactions" value="130"/>
</dbReference>
<dbReference type="FunCoup" id="Q14703">
    <property type="interactions" value="1963"/>
</dbReference>
<dbReference type="IntAct" id="Q14703">
    <property type="interactions" value="48"/>
</dbReference>
<dbReference type="MINT" id="Q14703"/>
<dbReference type="STRING" id="9606.ENSP00000344223"/>
<dbReference type="BindingDB" id="Q14703"/>
<dbReference type="ChEMBL" id="CHEMBL5916"/>
<dbReference type="GuidetoPHARMACOLOGY" id="2381"/>
<dbReference type="MEROPS" id="S08.063"/>
<dbReference type="GlyConnect" id="1500">
    <property type="glycosylation" value="1 N-Linked glycan (1 site)"/>
</dbReference>
<dbReference type="GlyCosmos" id="Q14703">
    <property type="glycosylation" value="6 sites, 1 glycan"/>
</dbReference>
<dbReference type="GlyGen" id="Q14703">
    <property type="glycosylation" value="15 sites, 8 N-linked glycans (4 sites), 2 O-linked glycans (8 sites)"/>
</dbReference>
<dbReference type="iPTMnet" id="Q14703"/>
<dbReference type="PhosphoSitePlus" id="Q14703"/>
<dbReference type="BioMuta" id="MBTPS1"/>
<dbReference type="DMDM" id="17368466"/>
<dbReference type="jPOST" id="Q14703"/>
<dbReference type="MassIVE" id="Q14703"/>
<dbReference type="PaxDb" id="9606-ENSP00000344223"/>
<dbReference type="PeptideAtlas" id="Q14703"/>
<dbReference type="ProteomicsDB" id="60141"/>
<dbReference type="Pumba" id="Q14703"/>
<dbReference type="Antibodypedia" id="1735">
    <property type="antibodies" value="126 antibodies from 24 providers"/>
</dbReference>
<dbReference type="DNASU" id="8720"/>
<dbReference type="Ensembl" id="ENST00000343411.8">
    <property type="protein sequence ID" value="ENSP00000344223.3"/>
    <property type="gene ID" value="ENSG00000140943.18"/>
</dbReference>
<dbReference type="GeneID" id="8720"/>
<dbReference type="KEGG" id="hsa:8720"/>
<dbReference type="MANE-Select" id="ENST00000343411.8">
    <property type="protein sequence ID" value="ENSP00000344223.3"/>
    <property type="RefSeq nucleotide sequence ID" value="NM_003791.4"/>
    <property type="RefSeq protein sequence ID" value="NP_003782.1"/>
</dbReference>
<dbReference type="UCSC" id="uc002fhi.5">
    <property type="organism name" value="human"/>
</dbReference>
<dbReference type="AGR" id="HGNC:15456"/>
<dbReference type="CTD" id="8720"/>
<dbReference type="DisGeNET" id="8720"/>
<dbReference type="GeneCards" id="MBTPS1"/>
<dbReference type="GeneReviews" id="MBTPS1"/>
<dbReference type="HGNC" id="HGNC:15456">
    <property type="gene designation" value="MBTPS1"/>
</dbReference>
<dbReference type="HPA" id="ENSG00000140943">
    <property type="expression patterns" value="Low tissue specificity"/>
</dbReference>
<dbReference type="MalaCards" id="MBTPS1"/>
<dbReference type="MIM" id="603355">
    <property type="type" value="gene"/>
</dbReference>
<dbReference type="MIM" id="618392">
    <property type="type" value="phenotype"/>
</dbReference>
<dbReference type="neXtProt" id="NX_Q14703"/>
<dbReference type="OpenTargets" id="ENSG00000140943"/>
<dbReference type="PharmGKB" id="PA30671"/>
<dbReference type="VEuPathDB" id="HostDB:ENSG00000140943"/>
<dbReference type="eggNOG" id="KOG4266">
    <property type="taxonomic scope" value="Eukaryota"/>
</dbReference>
<dbReference type="GeneTree" id="ENSGT00490000043404"/>
<dbReference type="HOGENOM" id="CLU_004504_1_0_1"/>
<dbReference type="InParanoid" id="Q14703"/>
<dbReference type="OMA" id="LEYTTTG"/>
<dbReference type="OrthoDB" id="1740355at2759"/>
<dbReference type="PAN-GO" id="Q14703">
    <property type="GO annotations" value="2 GO annotations based on evolutionary models"/>
</dbReference>
<dbReference type="PhylomeDB" id="Q14703"/>
<dbReference type="TreeFam" id="TF324501"/>
<dbReference type="BRENDA" id="3.4.21.112">
    <property type="organism ID" value="2681"/>
</dbReference>
<dbReference type="PathwayCommons" id="Q14703"/>
<dbReference type="Reactome" id="R-HSA-1655829">
    <property type="pathway name" value="Regulation of cholesterol biosynthesis by SREBP (SREBF)"/>
</dbReference>
<dbReference type="Reactome" id="R-HSA-381033">
    <property type="pathway name" value="ATF6 (ATF6-alpha) activates chaperones"/>
</dbReference>
<dbReference type="Reactome" id="R-HSA-381426">
    <property type="pathway name" value="Regulation of Insulin-like Growth Factor (IGF) transport and uptake by Insulin-like Growth Factor Binding Proteins (IGFBPs)"/>
</dbReference>
<dbReference type="Reactome" id="R-HSA-8874177">
    <property type="pathway name" value="ATF6B (ATF6-beta) activates chaperones"/>
</dbReference>
<dbReference type="Reactome" id="R-HSA-8874211">
    <property type="pathway name" value="CREB3 factors activate genes"/>
</dbReference>
<dbReference type="Reactome" id="R-HSA-8957275">
    <property type="pathway name" value="Post-translational protein phosphorylation"/>
</dbReference>
<dbReference type="Reactome" id="R-HSA-8963889">
    <property type="pathway name" value="Assembly of active LPL and LIPC lipase complexes"/>
</dbReference>
<dbReference type="SignaLink" id="Q14703"/>
<dbReference type="SIGNOR" id="Q14703"/>
<dbReference type="BioGRID-ORCS" id="8720">
    <property type="hits" value="504 hits in 1184 CRISPR screens"/>
</dbReference>
<dbReference type="ChiTaRS" id="MBTPS1">
    <property type="organism name" value="human"/>
</dbReference>
<dbReference type="GenomeRNAi" id="8720"/>
<dbReference type="Pharos" id="Q14703">
    <property type="development level" value="Tchem"/>
</dbReference>
<dbReference type="PRO" id="PR:Q14703"/>
<dbReference type="Proteomes" id="UP000005640">
    <property type="component" value="Chromosome 16"/>
</dbReference>
<dbReference type="RNAct" id="Q14703">
    <property type="molecule type" value="protein"/>
</dbReference>
<dbReference type="Bgee" id="ENSG00000140943">
    <property type="expression patterns" value="Expressed in stromal cell of endometrium and 207 other cell types or tissues"/>
</dbReference>
<dbReference type="ExpressionAtlas" id="Q14703">
    <property type="expression patterns" value="baseline and differential"/>
</dbReference>
<dbReference type="GO" id="GO:0005788">
    <property type="term" value="C:endoplasmic reticulum lumen"/>
    <property type="evidence" value="ECO:0000304"/>
    <property type="project" value="Reactome"/>
</dbReference>
<dbReference type="GO" id="GO:0005789">
    <property type="term" value="C:endoplasmic reticulum membrane"/>
    <property type="evidence" value="ECO:0007669"/>
    <property type="project" value="UniProtKB-SubCell"/>
</dbReference>
<dbReference type="GO" id="GO:0005794">
    <property type="term" value="C:Golgi apparatus"/>
    <property type="evidence" value="ECO:0000318"/>
    <property type="project" value="GO_Central"/>
</dbReference>
<dbReference type="GO" id="GO:0000139">
    <property type="term" value="C:Golgi membrane"/>
    <property type="evidence" value="ECO:0000314"/>
    <property type="project" value="UniProt"/>
</dbReference>
<dbReference type="GO" id="GO:0005795">
    <property type="term" value="C:Golgi stack"/>
    <property type="evidence" value="ECO:0007669"/>
    <property type="project" value="Ensembl"/>
</dbReference>
<dbReference type="GO" id="GO:0004252">
    <property type="term" value="F:serine-type endopeptidase activity"/>
    <property type="evidence" value="ECO:0000314"/>
    <property type="project" value="UniProtKB"/>
</dbReference>
<dbReference type="GO" id="GO:0036500">
    <property type="term" value="P:ATF6-mediated unfolded protein response"/>
    <property type="evidence" value="ECO:0000304"/>
    <property type="project" value="ParkinsonsUK-UCL"/>
</dbReference>
<dbReference type="GO" id="GO:0008203">
    <property type="term" value="P:cholesterol metabolic process"/>
    <property type="evidence" value="ECO:0007669"/>
    <property type="project" value="UniProtKB-KW"/>
</dbReference>
<dbReference type="GO" id="GO:0030968">
    <property type="term" value="P:endoplasmic reticulum unfolded protein response"/>
    <property type="evidence" value="ECO:0000304"/>
    <property type="project" value="Reactome"/>
</dbReference>
<dbReference type="GO" id="GO:0007040">
    <property type="term" value="P:lysosome organization"/>
    <property type="evidence" value="ECO:0000315"/>
    <property type="project" value="UniProtKB"/>
</dbReference>
<dbReference type="GO" id="GO:0031293">
    <property type="term" value="P:membrane protein intracellular domain proteolysis"/>
    <property type="evidence" value="ECO:0000250"/>
    <property type="project" value="ParkinsonsUK-UCL"/>
</dbReference>
<dbReference type="GO" id="GO:0007095">
    <property type="term" value="P:mitotic G2 DNA damage checkpoint signaling"/>
    <property type="evidence" value="ECO:0007669"/>
    <property type="project" value="Ensembl"/>
</dbReference>
<dbReference type="GO" id="GO:0006606">
    <property type="term" value="P:protein import into nucleus"/>
    <property type="evidence" value="ECO:0007669"/>
    <property type="project" value="Ensembl"/>
</dbReference>
<dbReference type="GO" id="GO:0051604">
    <property type="term" value="P:protein maturation"/>
    <property type="evidence" value="ECO:0000314"/>
    <property type="project" value="UniProt"/>
</dbReference>
<dbReference type="GO" id="GO:0016485">
    <property type="term" value="P:protein processing"/>
    <property type="evidence" value="ECO:0000314"/>
    <property type="project" value="UniProtKB"/>
</dbReference>
<dbReference type="GO" id="GO:0006508">
    <property type="term" value="P:proteolysis"/>
    <property type="evidence" value="ECO:0000315"/>
    <property type="project" value="UniProtKB"/>
</dbReference>
<dbReference type="GO" id="GO:0045540">
    <property type="term" value="P:regulation of cholesterol biosynthetic process"/>
    <property type="evidence" value="ECO:0000304"/>
    <property type="project" value="Reactome"/>
</dbReference>
<dbReference type="GO" id="GO:0060627">
    <property type="term" value="P:regulation of vesicle-mediated transport"/>
    <property type="evidence" value="ECO:0000315"/>
    <property type="project" value="UniProtKB"/>
</dbReference>
<dbReference type="GO" id="GO:0034976">
    <property type="term" value="P:response to endoplasmic reticulum stress"/>
    <property type="evidence" value="ECO:0000250"/>
    <property type="project" value="ParkinsonsUK-UCL"/>
</dbReference>
<dbReference type="CDD" id="cd07479">
    <property type="entry name" value="Peptidases_S8_SKI-1_like"/>
    <property type="match status" value="1"/>
</dbReference>
<dbReference type="FunFam" id="3.40.50.200:FF:000008">
    <property type="entry name" value="Membrane-bound transcription factor site-1 protease preproprotein"/>
    <property type="match status" value="1"/>
</dbReference>
<dbReference type="Gene3D" id="3.40.50.200">
    <property type="entry name" value="Peptidase S8/S53 domain"/>
    <property type="match status" value="1"/>
</dbReference>
<dbReference type="InterPro" id="IPR055143">
    <property type="entry name" value="MBTP1_N"/>
</dbReference>
<dbReference type="InterPro" id="IPR057060">
    <property type="entry name" value="MBTPS1_3rd"/>
</dbReference>
<dbReference type="InterPro" id="IPR057032">
    <property type="entry name" value="MBTPS1_4th"/>
</dbReference>
<dbReference type="InterPro" id="IPR000209">
    <property type="entry name" value="Peptidase_S8/S53_dom"/>
</dbReference>
<dbReference type="InterPro" id="IPR036852">
    <property type="entry name" value="Peptidase_S8/S53_dom_sf"/>
</dbReference>
<dbReference type="InterPro" id="IPR022398">
    <property type="entry name" value="Peptidase_S8_His-AS"/>
</dbReference>
<dbReference type="InterPro" id="IPR023828">
    <property type="entry name" value="Peptidase_S8_Ser-AS"/>
</dbReference>
<dbReference type="InterPro" id="IPR050131">
    <property type="entry name" value="Peptidase_S8_subtilisin-like"/>
</dbReference>
<dbReference type="InterPro" id="IPR015500">
    <property type="entry name" value="Peptidase_S8_subtilisin-rel"/>
</dbReference>
<dbReference type="InterPro" id="IPR034185">
    <property type="entry name" value="Site-1_peptidase_cat_dom"/>
</dbReference>
<dbReference type="PANTHER" id="PTHR43806:SF7">
    <property type="entry name" value="MEMBRANE-BOUND TRANSCRIPTION FACTOR SITE-1 PROTEASE"/>
    <property type="match status" value="1"/>
</dbReference>
<dbReference type="PANTHER" id="PTHR43806">
    <property type="entry name" value="PEPTIDASE S8"/>
    <property type="match status" value="1"/>
</dbReference>
<dbReference type="Pfam" id="PF23001">
    <property type="entry name" value="MBTP1_N"/>
    <property type="match status" value="1"/>
</dbReference>
<dbReference type="Pfam" id="PF23094">
    <property type="entry name" value="MBTPS1_3rd"/>
    <property type="match status" value="1"/>
</dbReference>
<dbReference type="Pfam" id="PF23090">
    <property type="entry name" value="MBTPS1_4th"/>
    <property type="match status" value="1"/>
</dbReference>
<dbReference type="Pfam" id="PF00082">
    <property type="entry name" value="Peptidase_S8"/>
    <property type="match status" value="1"/>
</dbReference>
<dbReference type="PRINTS" id="PR00723">
    <property type="entry name" value="SUBTILISIN"/>
</dbReference>
<dbReference type="SUPFAM" id="SSF52743">
    <property type="entry name" value="Subtilisin-like"/>
    <property type="match status" value="1"/>
</dbReference>
<dbReference type="PROSITE" id="PS51892">
    <property type="entry name" value="SUBTILASE"/>
    <property type="match status" value="1"/>
</dbReference>
<dbReference type="PROSITE" id="PS00137">
    <property type="entry name" value="SUBTILASE_HIS"/>
    <property type="match status" value="1"/>
</dbReference>
<dbReference type="PROSITE" id="PS00138">
    <property type="entry name" value="SUBTILASE_SER"/>
    <property type="match status" value="1"/>
</dbReference>
<feature type="signal peptide">
    <location>
        <begin position="1"/>
        <end position="17"/>
    </location>
</feature>
<feature type="propeptide" id="PRO_0000027051">
    <location>
        <begin position="18"/>
        <end position="186"/>
    </location>
</feature>
<feature type="chain" id="PRO_0000027052" description="Membrane-bound transcription factor site-1 protease">
    <location>
        <begin position="187"/>
        <end position="1052"/>
    </location>
</feature>
<feature type="topological domain" description="Lumenal" evidence="1">
    <location>
        <begin position="187"/>
        <end position="998"/>
    </location>
</feature>
<feature type="transmembrane region" description="Helical" evidence="1">
    <location>
        <begin position="999"/>
        <end position="1021"/>
    </location>
</feature>
<feature type="topological domain" description="Cytoplasmic" evidence="1">
    <location>
        <begin position="1022"/>
        <end position="1052"/>
    </location>
</feature>
<feature type="domain" description="Peptidase S8" evidence="2">
    <location>
        <begin position="190"/>
        <end position="472"/>
    </location>
</feature>
<feature type="region of interest" description="Disordered" evidence="3">
    <location>
        <begin position="877"/>
        <end position="899"/>
    </location>
</feature>
<feature type="region of interest" description="Disordered" evidence="3">
    <location>
        <begin position="1027"/>
        <end position="1052"/>
    </location>
</feature>
<feature type="compositionally biased region" description="Polar residues" evidence="3">
    <location>
        <begin position="877"/>
        <end position="887"/>
    </location>
</feature>
<feature type="compositionally biased region" description="Basic residues" evidence="3">
    <location>
        <begin position="1027"/>
        <end position="1037"/>
    </location>
</feature>
<feature type="active site" description="Charge relay system" evidence="2">
    <location>
        <position position="218"/>
    </location>
</feature>
<feature type="active site" description="Charge relay system" evidence="2">
    <location>
        <position position="249"/>
    </location>
</feature>
<feature type="active site" description="Charge relay system" evidence="2">
    <location>
        <position position="414"/>
    </location>
</feature>
<feature type="site" description="Cleavage; by autolysis" evidence="4">
    <location>
        <begin position="186"/>
        <end position="187"/>
    </location>
</feature>
<feature type="modified residue" description="Phosphoserine; by FAM20C" evidence="9">
    <location>
        <position position="168"/>
    </location>
</feature>
<feature type="glycosylation site" description="N-linked (GlcNAc...) asparagine" evidence="1">
    <location>
        <position position="236"/>
    </location>
</feature>
<feature type="glycosylation site" description="N-linked (GlcNAc...) asparagine" evidence="1">
    <location>
        <position position="305"/>
    </location>
</feature>
<feature type="glycosylation site" description="N-linked (GlcNAc...) asparagine" evidence="1">
    <location>
        <position position="515"/>
    </location>
</feature>
<feature type="glycosylation site" description="N-linked (GlcNAc...) asparagine" evidence="1">
    <location>
        <position position="728"/>
    </location>
</feature>
<feature type="glycosylation site" description="N-linked (GlcNAc...) asparagine" evidence="1">
    <location>
        <position position="939"/>
    </location>
</feature>
<feature type="sequence variant" id="VAR_051822" description="In dbSNP:rs34701895.">
    <original>I</original>
    <variation>T</variation>
    <location>
        <position position="6"/>
    </location>
</feature>
<feature type="sequence variant" id="VAR_051823" description="In dbSNP:rs34076105.">
    <original>R</original>
    <variation>G</variation>
    <location>
        <position position="90"/>
    </location>
</feature>
<feature type="sequence variant" id="VAR_082197" description="In SEDKF; due to a nucleotide substitution that creates a dominant splice donor site in exon 9; two different type of transcripts are produced, a major non-functional alternatively spliced transcript with a 41-bp deletion of exon 9, loss of S-414 in the catalytic triad and premature truncation and a normally spliced transcript with variant G-365; the transcript with G-365 produces a catalytically active protein but is the less abundant; dbSNP:rs1226321681." evidence="10">
    <original>D</original>
    <variation>G</variation>
    <location>
        <position position="365"/>
    </location>
</feature>
<feature type="sequence variant" id="VAR_087565" description="In SEDKF; uncertain significance." evidence="13">
    <original>S</original>
    <variation>R</variation>
    <location>
        <position position="878"/>
    </location>
</feature>
<feature type="mutagenesis site" description="Abolishes serine protease activity." evidence="6">
    <original>H</original>
    <variation>A</variation>
    <location>
        <position position="249"/>
    </location>
</feature>
<feature type="mutagenesis site" description="Abolishes serine protease activity. Does not promote FAM20C kinase activity." evidence="10 11">
    <original>S</original>
    <variation>A</variation>
    <location>
        <position position="414"/>
    </location>
</feature>
<feature type="sequence conflict" description="In Ref. 3; BAF84462." evidence="19" ref="3">
    <original>L</original>
    <variation>Q</variation>
    <location>
        <position position="843"/>
    </location>
</feature>
<feature type="strand" evidence="22">
    <location>
        <begin position="44"/>
        <end position="46"/>
    </location>
</feature>
<feature type="strand" evidence="22">
    <location>
        <begin position="49"/>
        <end position="59"/>
    </location>
</feature>
<feature type="helix" evidence="22">
    <location>
        <begin position="66"/>
        <end position="79"/>
    </location>
</feature>
<feature type="strand" evidence="22">
    <location>
        <begin position="85"/>
        <end position="87"/>
    </location>
</feature>
<feature type="turn" evidence="22">
    <location>
        <begin position="93"/>
        <end position="96"/>
    </location>
</feature>
<feature type="strand" evidence="22">
    <location>
        <begin position="103"/>
        <end position="106"/>
    </location>
</feature>
<feature type="helix" evidence="22">
    <location>
        <begin position="110"/>
        <end position="118"/>
    </location>
</feature>
<feature type="strand" evidence="22">
    <location>
        <begin position="120"/>
        <end position="122"/>
    </location>
</feature>
<feature type="strand" evidence="22">
    <location>
        <begin position="125"/>
        <end position="133"/>
    </location>
</feature>
<feature type="strand" evidence="22">
    <location>
        <begin position="135"/>
        <end position="137"/>
    </location>
</feature>
<feature type="helix" evidence="22">
    <location>
        <begin position="193"/>
        <end position="196"/>
    </location>
</feature>
<feature type="helix" evidence="22">
    <location>
        <begin position="199"/>
        <end position="205"/>
    </location>
</feature>
<feature type="strand" evidence="22">
    <location>
        <begin position="213"/>
        <end position="219"/>
    </location>
</feature>
<feature type="strand" evidence="22">
    <location>
        <begin position="231"/>
        <end position="233"/>
    </location>
</feature>
<feature type="strand" evidence="22">
    <location>
        <begin position="238"/>
        <end position="240"/>
    </location>
</feature>
<feature type="strand" evidence="22">
    <location>
        <begin position="246"/>
        <end position="248"/>
    </location>
</feature>
<feature type="helix" evidence="22">
    <location>
        <begin position="249"/>
        <end position="257"/>
    </location>
</feature>
<feature type="strand" evidence="22">
    <location>
        <begin position="261"/>
        <end position="263"/>
    </location>
</feature>
<feature type="strand" evidence="22">
    <location>
        <begin position="271"/>
        <end position="276"/>
    </location>
</feature>
<feature type="strand" evidence="22">
    <location>
        <begin position="283"/>
        <end position="285"/>
    </location>
</feature>
<feature type="helix" evidence="22">
    <location>
        <begin position="286"/>
        <end position="299"/>
    </location>
</feature>
<feature type="strand" evidence="22">
    <location>
        <begin position="302"/>
        <end position="306"/>
    </location>
</feature>
<feature type="turn" evidence="22">
    <location>
        <begin position="311"/>
        <end position="313"/>
    </location>
</feature>
<feature type="helix" evidence="22">
    <location>
        <begin position="316"/>
        <end position="327"/>
    </location>
</feature>
<feature type="strand" evidence="22">
    <location>
        <begin position="331"/>
        <end position="335"/>
    </location>
</feature>
<feature type="turn" evidence="21">
    <location>
        <begin position="349"/>
        <end position="351"/>
    </location>
</feature>
<feature type="strand" evidence="22">
    <location>
        <begin position="352"/>
        <end position="361"/>
    </location>
</feature>
<feature type="turn" evidence="21">
    <location>
        <begin position="378"/>
        <end position="382"/>
    </location>
</feature>
<feature type="strand" evidence="22">
    <location>
        <begin position="390"/>
        <end position="394"/>
    </location>
</feature>
<feature type="strand" evidence="22">
    <location>
        <begin position="396"/>
        <end position="401"/>
    </location>
</feature>
<feature type="strand" evidence="22">
    <location>
        <begin position="403"/>
        <end position="405"/>
    </location>
</feature>
<feature type="strand" evidence="22">
    <location>
        <begin position="407"/>
        <end position="410"/>
    </location>
</feature>
<feature type="helix" evidence="22">
    <location>
        <begin position="413"/>
        <end position="430"/>
    </location>
</feature>
<feature type="helix" evidence="22">
    <location>
        <begin position="434"/>
        <end position="436"/>
    </location>
</feature>
<feature type="helix" evidence="22">
    <location>
        <begin position="439"/>
        <end position="448"/>
    </location>
</feature>
<feature type="helix" evidence="22">
    <location>
        <begin position="458"/>
        <end position="461"/>
    </location>
</feature>
<feature type="helix" evidence="22">
    <location>
        <begin position="468"/>
        <end position="477"/>
    </location>
</feature>
<feature type="strand" evidence="22">
    <location>
        <begin position="482"/>
        <end position="490"/>
    </location>
</feature>
<feature type="turn" evidence="22">
    <location>
        <begin position="494"/>
        <end position="499"/>
    </location>
</feature>
<feature type="helix" evidence="22">
    <location>
        <begin position="500"/>
        <end position="502"/>
    </location>
</feature>
<feature type="strand" evidence="22">
    <location>
        <begin position="512"/>
        <end position="520"/>
    </location>
</feature>
<feature type="strand" evidence="22">
    <location>
        <begin position="524"/>
        <end position="528"/>
    </location>
</feature>
<feature type="strand" evidence="22">
    <location>
        <begin position="533"/>
        <end position="536"/>
    </location>
</feature>
<feature type="turn" evidence="22">
    <location>
        <begin position="538"/>
        <end position="541"/>
    </location>
</feature>
<feature type="helix" evidence="22">
    <location>
        <begin position="542"/>
        <end position="544"/>
    </location>
</feature>
<feature type="strand" evidence="22">
    <location>
        <begin position="545"/>
        <end position="550"/>
    </location>
</feature>
<feature type="strand" evidence="22">
    <location>
        <begin position="553"/>
        <end position="555"/>
    </location>
</feature>
<feature type="strand" evidence="22">
    <location>
        <begin position="557"/>
        <end position="568"/>
    </location>
</feature>
<feature type="turn" evidence="22">
    <location>
        <begin position="571"/>
        <end position="574"/>
    </location>
</feature>
<feature type="strand" evidence="22">
    <location>
        <begin position="577"/>
        <end position="589"/>
    </location>
</feature>
<feature type="strand" evidence="22">
    <location>
        <begin position="601"/>
        <end position="613"/>
    </location>
</feature>
<feature type="turn" evidence="21">
    <location>
        <begin position="619"/>
        <end position="621"/>
    </location>
</feature>
<feature type="strand" evidence="21">
    <location>
        <begin position="622"/>
        <end position="626"/>
    </location>
</feature>
<feature type="turn" evidence="21">
    <location>
        <begin position="633"/>
        <end position="635"/>
    </location>
</feature>
<feature type="strand" evidence="21">
    <location>
        <begin position="659"/>
        <end position="661"/>
    </location>
</feature>
<feature type="helix" evidence="21">
    <location>
        <begin position="662"/>
        <end position="670"/>
    </location>
</feature>
<feature type="strand" evidence="21">
    <location>
        <begin position="674"/>
        <end position="678"/>
    </location>
</feature>
<feature type="helix" evidence="21">
    <location>
        <begin position="682"/>
        <end position="684"/>
    </location>
</feature>
<feature type="turn" evidence="21">
    <location>
        <begin position="687"/>
        <end position="689"/>
    </location>
</feature>
<feature type="strand" evidence="21">
    <location>
        <begin position="691"/>
        <end position="697"/>
    </location>
</feature>
<feature type="helix" evidence="21">
    <location>
        <begin position="704"/>
        <end position="716"/>
    </location>
</feature>
<feature type="strand" evidence="21">
    <location>
        <begin position="719"/>
        <end position="723"/>
    </location>
</feature>
<feature type="helix" evidence="21">
    <location>
        <begin position="729"/>
        <end position="734"/>
    </location>
</feature>
<feature type="strand" evidence="21">
    <location>
        <begin position="737"/>
        <end position="739"/>
    </location>
</feature>
<feature type="turn" evidence="21">
    <location>
        <begin position="740"/>
        <end position="743"/>
    </location>
</feature>
<feature type="strand" evidence="21">
    <location>
        <begin position="744"/>
        <end position="746"/>
    </location>
</feature>
<feature type="strand" evidence="21">
    <location>
        <begin position="749"/>
        <end position="753"/>
    </location>
</feature>
<feature type="helix" evidence="21">
    <location>
        <begin position="755"/>
        <end position="762"/>
    </location>
</feature>
<feature type="helix" evidence="21">
    <location>
        <begin position="763"/>
        <end position="765"/>
    </location>
</feature>
<feature type="strand" evidence="21">
    <location>
        <begin position="774"/>
        <end position="780"/>
    </location>
</feature>
<feature type="strand" evidence="21">
    <location>
        <begin position="783"/>
        <end position="790"/>
    </location>
</feature>
<feature type="strand" evidence="21">
    <location>
        <begin position="803"/>
        <end position="809"/>
    </location>
</feature>
<feature type="helix" evidence="21">
    <location>
        <begin position="810"/>
        <end position="816"/>
    </location>
</feature>
<feature type="strand" evidence="21">
    <location>
        <begin position="821"/>
        <end position="832"/>
    </location>
</feature>
<feature type="strand" evidence="21">
    <location>
        <begin position="840"/>
        <end position="845"/>
    </location>
</feature>
<feature type="turn" evidence="21">
    <location>
        <begin position="848"/>
        <end position="850"/>
    </location>
</feature>
<feature type="helix" evidence="21">
    <location>
        <begin position="860"/>
        <end position="872"/>
    </location>
</feature>
<feature type="helix" evidence="21">
    <location>
        <begin position="877"/>
        <end position="880"/>
    </location>
</feature>
<feature type="strand" evidence="21">
    <location>
        <begin position="892"/>
        <end position="894"/>
    </location>
</feature>
<feature type="helix" evidence="21">
    <location>
        <begin position="905"/>
        <end position="908"/>
    </location>
</feature>
<feature type="strand" evidence="21">
    <location>
        <begin position="910"/>
        <end position="912"/>
    </location>
</feature>
<feature type="strand" evidence="21">
    <location>
        <begin position="916"/>
        <end position="918"/>
    </location>
</feature>
<comment type="function">
    <text evidence="4 6 7 8 10 11">Serine protease that cleaves after hydrophobic or small residues, provided that Arg or Lys is in position P4: known substrates include SREBF1/SREBP1, SREBF2/SREBP2, BDNF, GNPTAB, ATF6, ATF6B and FAM20C (PubMed:10644685, PubMed:12782636, PubMed:21719679, PubMed:34349020). Cleaves substrates after Arg-Ser-Val-Leu (SREBP2), Arg-His-Leu-Leu (ATF6), Arg-Gly-Leu-Thr (BDNF) and its own propeptide after Arg-Arg-Leu-Leu (PubMed:10644685, PubMed:21719679). Catalyzes the first step in the proteolytic activation of the sterol regulatory element-binding proteins (SREBPs) SREBF1/SREBP1 and SREBF2/SREBP2 (PubMed:12782636). Also mediates the first step in the proteolytic activation of the cyclic AMP-dependent transcription factor ATF-6 (ATF6 and ATF6B) (PubMed:12782636). Mediates the protein cleavage of GNPTAB into subunit alpha and beta, thereby participating in biogenesis of lysosomes (PubMed:21719679). Cleaves the propeptide from FAM20C which is required for FAM20C secretion from the Golgi apparatus membrane and for enhancement of FAM20C kinase activity, promoting osteoblast differentiation and biomineralization (PubMed:34349020). Involved in the regulation of M6P-dependent Golgi-to-lysosome trafficking of lysosomal enzymes (PubMed:21719679, PubMed:30046013). It is required for the activation of CREB3L2/BBF2H7, a transcriptional activator of MIA3/TANGO and other genes controlling mega vesicle formation (PubMed:30046013). Therefore, it plays a key role in the regulation of mega vesicle-mediated collagen trafficking (PubMed:30046013). In astrocytes and osteoblasts, upon DNA damage and ER stress, mediates the first step of the regulated intramembrane proteolytic activation of the transcription factor CREB3L1, leading to the inhibition of cell-cycle progression (PubMed:16417584).</text>
</comment>
<comment type="catalytic activity">
    <reaction evidence="4 6 8 11">
        <text>Processes precursors containing basic and hydrophobic/aliphatic residues at P4 and P2, respectively, with a relatively relaxed acceptance of amino acids at P1 and P3.</text>
        <dbReference type="EC" id="3.4.21.112"/>
    </reaction>
</comment>
<comment type="cofactor">
    <cofactor evidence="4">
        <name>Ca(2+)</name>
        <dbReference type="ChEBI" id="CHEBI:29108"/>
    </cofactor>
</comment>
<comment type="activity regulation">
    <text evidence="4 6">Inhibited by divalent copper and zinc ions, but not by nickel or cobalt (PubMed:10644685). Inhibited by its prosegment, but not smaller fragments (PubMed:10644685). Inhibited by 4-(2-aminoethyl)benzenesulfonyl fluoride (AEBSF), a serine protease inhibitor (PubMed:12782636).</text>
</comment>
<comment type="subunit">
    <text evidence="12">Interacts with LYSET; this interaction bridges GNPTAB to MBTPS1.</text>
</comment>
<comment type="subcellular location">
    <subcellularLocation>
        <location evidence="14">Endoplasmic reticulum membrane</location>
        <topology evidence="14">Single-pass type I membrane protein</topology>
    </subcellularLocation>
    <subcellularLocation>
        <location evidence="11 14">Golgi apparatus membrane</location>
        <topology evidence="14">Single-pass type I membrane protein</topology>
    </subcellularLocation>
    <text evidence="14">May sort to other organelles, including lysosomal and/or endosomal compartments.</text>
</comment>
<comment type="tissue specificity">
    <text evidence="5">Widely expressed.</text>
</comment>
<comment type="induction">
    <text evidence="5">Down-regulated by sterols.</text>
</comment>
<comment type="PTM">
    <text evidence="4">The 148 kDa zymogen is processed progressively into two membrane-bound 120 and 106 kDa forms in the endoplasmic reticulum, and late into a secreted 98 kDa form (PubMed:10644685). The propeptide is autocatalytically removed through an intramolecular cleavage after Leu-186. Further cleavage generates 14, 10, and 8 kDa intermediates (PubMed:10644685).</text>
</comment>
<comment type="disease" evidence="10 13">
    <disease id="DI-05540">
        <name>Spondyloepiphyseal dysplasia, Kondo-Fu type</name>
        <acronym>SEDKF</acronym>
        <description>A disorder characterized by severely retarded growth, spondyloepiphyseal dysplasia, reduced bone mineral density, and markedly elevated plasma levels of various lysosomal enzymes. Additional features include pectus carinatum, kyphosis, a waddling gait, brachydactyly and dysmorphic facial features. SEDKF transmission pattern is consistent with autosomal recessive inheritance.</description>
        <dbReference type="MIM" id="618392"/>
    </disease>
    <text>The disease is caused by variants affecting the gene represented in this entry.</text>
</comment>
<comment type="similarity">
    <text evidence="19">Belongs to the peptidase S8 family.</text>
</comment>
<comment type="sequence caution" evidence="19">
    <conflict type="erroneous initiation">
        <sequence resource="EMBL-CDS" id="BAA07653"/>
    </conflict>
    <text>Extended N-terminus.</text>
</comment>
<sequence>MKLVNIWLLLLVVLLCGKKHLGDRLEKKSFEKAPCPGCSHLTLKVEFSSTVVEYEYIVAFNGYFTAKARNSFISSALKSSEVDNWRIIPRNNPSSDYPSDFEVIQIKEKQKAGLLTLEDHPNIKRVTPQRKVFRSLKYAESDPTVPCNETRWSQKWQSSRPLRRASLSLGSGFWHATGRHSSRRLLRAIPRQVAQTLQADVLWQMGYTGANVRVAVFDTGLSEKHPHFKNVKERTNWTNERTLDDGLGHGTFVAGVIASMRECQGFAPDAELHIFRVFTNNQVSYTSWFLDAFNYAILKKIDVLNLSIGGPDFMDHPFVDKVWELTANNVIMVSAIGNDGPLYGTLNNPADQMDVIGVGGIDFEDNIARFSSRGMTTWELPGGYGRMKPDIVTYGAGVRGSGVKGGCRALSGTSVASPVVAGAVTLLVSTVQKRELVNPASMKQALIASARRLPGVNMFEQGHGKLDLLRAYQILNSYKPQASLSPSYIDLTECPYMWPYCSQPIYYGGMPTVVNVTILNGMGVTGRIVDKPDWQPYLPQNGDNIEVAFSYSSVLWPWSGYLAISISVTKKAASWEGIAQGHVMITVASPAETESKNGAEQTSTVKLPIKVKIIPTPPRSKRVLWDQYHNLRYPPGYFPRDNLRMKNDPLDWNGDHIHTNFRDMYQHLRSMGYFVEVLGAPFTCFDASQYGTLLMVDSEEEYFPEEIAKLRRDVDNGLSLVIFSDWYNTSVMRKVKFYDENTRQWWMPDTGGANIPALNELLSVWNMGFSDGLYEGEFTLANHDMYYASGCSIAKFPEDGVVITQTFKDQGLEVLKQETAVVENVPILGLYQIPAEGGGRIVLYGDSNCLDDSHRQKDCFWLLDALLQYTSYGVTPPSLSHSGNRQRPPSGAGSVTPERMEGNHLHRYSKVLEAHLGDPKPRPLPACPRLSWAKPQPLNETAPSNLWKHQKLLSIDLDKVVLPNFRSNRPQVRPLSPGESGAWDIPGGIMPGRYNQEVGQTIPVFAFLGAMVVLAFFVVQINKAKSRPKRRKPRVKRPQLMQQVHPPKTPSV</sequence>
<accession>Q14703</accession>
<accession>A8K6V8</accession>
<accession>Q24JQ2</accession>
<accession>Q9UF67</accession>